<dbReference type="EMBL" id="AF313914">
    <property type="protein sequence ID" value="AAG34696.1"/>
    <property type="molecule type" value="mRNA"/>
</dbReference>
<dbReference type="SMR" id="Q9FPN0"/>
<dbReference type="TCDB" id="2.A.123.1.7">
    <property type="family name" value="the sweet, pq-loop, saliva, mtn3 (sweet) family"/>
</dbReference>
<dbReference type="GO" id="GO:0005886">
    <property type="term" value="C:plasma membrane"/>
    <property type="evidence" value="ECO:0000250"/>
    <property type="project" value="UniProtKB"/>
</dbReference>
<dbReference type="GO" id="GO:0051119">
    <property type="term" value="F:sugar transmembrane transporter activity"/>
    <property type="evidence" value="ECO:0000250"/>
    <property type="project" value="UniProtKB"/>
</dbReference>
<dbReference type="GO" id="GO:0009901">
    <property type="term" value="P:anther dehiscence"/>
    <property type="evidence" value="ECO:0000315"/>
    <property type="project" value="UniProtKB"/>
</dbReference>
<dbReference type="GO" id="GO:0009555">
    <property type="term" value="P:pollen development"/>
    <property type="evidence" value="ECO:0000315"/>
    <property type="project" value="UniProtKB"/>
</dbReference>
<dbReference type="FunFam" id="1.20.1280.290:FF:000001">
    <property type="entry name" value="Bidirectional sugar transporter SWEET"/>
    <property type="match status" value="1"/>
</dbReference>
<dbReference type="FunFam" id="1.20.1280.290:FF:000003">
    <property type="entry name" value="Bidirectional sugar transporter SWEET"/>
    <property type="match status" value="1"/>
</dbReference>
<dbReference type="Gene3D" id="1.20.1280.290">
    <property type="match status" value="2"/>
</dbReference>
<dbReference type="InterPro" id="IPR047664">
    <property type="entry name" value="SWEET"/>
</dbReference>
<dbReference type="InterPro" id="IPR004316">
    <property type="entry name" value="SWEET_rpt"/>
</dbReference>
<dbReference type="PANTHER" id="PTHR10791:SF134">
    <property type="entry name" value="BIDIRECTIONAL SUGAR TRANSPORTER SWEET9"/>
    <property type="match status" value="1"/>
</dbReference>
<dbReference type="PANTHER" id="PTHR10791">
    <property type="entry name" value="RAG1-ACTIVATING PROTEIN 1"/>
    <property type="match status" value="1"/>
</dbReference>
<dbReference type="Pfam" id="PF03083">
    <property type="entry name" value="MtN3_slv"/>
    <property type="match status" value="2"/>
</dbReference>
<gene>
    <name type="primary">NEC1</name>
</gene>
<protein>
    <recommendedName>
        <fullName>Bidirectional sugar transporter NEC1</fullName>
    </recommendedName>
    <alternativeName>
        <fullName>NEC1</fullName>
    </alternativeName>
</protein>
<evidence type="ECO:0000250" key="1">
    <source>
        <dbReference type="UniProtKB" id="Q8L9J7"/>
    </source>
</evidence>
<evidence type="ECO:0000255" key="2"/>
<evidence type="ECO:0000269" key="3">
    <source>
    </source>
</evidence>
<evidence type="ECO:0000269" key="4">
    <source>
    </source>
</evidence>
<evidence type="ECO:0000305" key="5"/>
<name>NEC1_PETHY</name>
<comment type="function">
    <text evidence="1 3 4">Mediates both low-affinity uptake and efflux of sugar across the plasma membrane. Promotes the formation of phloem bundles in mid-veins. Probably involved in the development of stomium cells that control anther opening time. Required for pollen viability (PubMed:11135107, PubMed:11405624).</text>
</comment>
<comment type="subunit">
    <text evidence="1">Forms homooligomers and/or heterooligomers.</text>
</comment>
<comment type="subcellular location">
    <subcellularLocation>
        <location evidence="1">Cell membrane</location>
        <topology evidence="1">Multi-pass membrane protein</topology>
    </subcellularLocation>
</comment>
<comment type="tissue specificity">
    <text evidence="3">Highly expressed in nectary tissue and weakly in the stamen, especially in stomium cells and in the upper part of the filaments.</text>
</comment>
<comment type="developmental stage">
    <text evidence="3">Detected in the outer nectary parenchyma cells, the upper part of the filament and the anther stomium. Expressed in spots pattern on the surface of very young nectaries that do not secrete nectar and do accumulate starch. Highest levels in open flowers in which active secretion of nectar and starch hydrolysis have taken place.</text>
</comment>
<comment type="disruption phenotype">
    <text evidence="4">'Early open anther' phenotype; anther opening in young flower buds that contain immature pollen, resulting in poor pollen quality and impaired pollen release.</text>
</comment>
<comment type="similarity">
    <text evidence="5">Belongs to the SWEET sugar transporter family.</text>
</comment>
<organism>
    <name type="scientific">Petunia hybrida</name>
    <name type="common">Petunia</name>
    <dbReference type="NCBI Taxonomy" id="4102"/>
    <lineage>
        <taxon>Eukaryota</taxon>
        <taxon>Viridiplantae</taxon>
        <taxon>Streptophyta</taxon>
        <taxon>Embryophyta</taxon>
        <taxon>Tracheophyta</taxon>
        <taxon>Spermatophyta</taxon>
        <taxon>Magnoliopsida</taxon>
        <taxon>eudicotyledons</taxon>
        <taxon>Gunneridae</taxon>
        <taxon>Pentapetalae</taxon>
        <taxon>asterids</taxon>
        <taxon>lamiids</taxon>
        <taxon>Solanales</taxon>
        <taxon>Solanaceae</taxon>
        <taxon>Petunioideae</taxon>
        <taxon>Petunia</taxon>
    </lineage>
</organism>
<sequence length="265" mass="30256">MAQLRADDLSFIFGLLGNIVSFMVFLAPVPTFYKIYKRKSSEGYQAIPYMVALFSAGLLLYYAYLRKNAYLIVSINGFGCAIELTYISLFLFYAPRKSKIFTGWLMLLELGALGMVMPITYLLAEGSHRVMIVGWICAAINVAVFAAPLSIMRQVIKTKSVEFMPFTLSLFLTLCATMWFFYGFFKKDFYIAFPNILGFLFGIVQMLLYFVYKDSKRIDDEKSDPVREATKSKEGVEIIINIEDDNSDNALQSMEKDFSRLRTSK</sequence>
<proteinExistence type="evidence at transcript level"/>
<feature type="chain" id="PRO_0000404151" description="Bidirectional sugar transporter NEC1">
    <location>
        <begin position="1"/>
        <end position="265"/>
    </location>
</feature>
<feature type="topological domain" description="Extracellular" evidence="2">
    <location>
        <begin position="1"/>
        <end position="8"/>
    </location>
</feature>
<feature type="transmembrane region" description="Helical; Name=1" evidence="2">
    <location>
        <begin position="9"/>
        <end position="29"/>
    </location>
</feature>
<feature type="topological domain" description="Cytoplasmic" evidence="2">
    <location>
        <begin position="30"/>
        <end position="44"/>
    </location>
</feature>
<feature type="transmembrane region" description="Helical; Name=2" evidence="2">
    <location>
        <begin position="45"/>
        <end position="65"/>
    </location>
</feature>
<feature type="topological domain" description="Extracellular" evidence="2">
    <location>
        <begin position="66"/>
        <end position="71"/>
    </location>
</feature>
<feature type="transmembrane region" description="Helical; Name=3" evidence="2">
    <location>
        <begin position="72"/>
        <end position="92"/>
    </location>
</feature>
<feature type="topological domain" description="Cytoplasmic" evidence="2">
    <location>
        <begin position="93"/>
        <end position="103"/>
    </location>
</feature>
<feature type="transmembrane region" description="Helical; Name=4" evidence="2">
    <location>
        <begin position="104"/>
        <end position="124"/>
    </location>
</feature>
<feature type="topological domain" description="Extracellular" evidence="2">
    <location>
        <begin position="125"/>
        <end position="130"/>
    </location>
</feature>
<feature type="transmembrane region" description="Helical; Name=5" evidence="2">
    <location>
        <begin position="131"/>
        <end position="151"/>
    </location>
</feature>
<feature type="topological domain" description="Cytoplasmic" evidence="2">
    <location>
        <begin position="152"/>
        <end position="164"/>
    </location>
</feature>
<feature type="transmembrane region" description="Helical; Name=6" evidence="2">
    <location>
        <begin position="165"/>
        <end position="185"/>
    </location>
</feature>
<feature type="topological domain" description="Extracellular" evidence="2">
    <location>
        <begin position="186"/>
        <end position="190"/>
    </location>
</feature>
<feature type="transmembrane region" description="Helical; Name=7" evidence="2">
    <location>
        <begin position="191"/>
        <end position="211"/>
    </location>
</feature>
<feature type="topological domain" description="Cytoplasmic" evidence="2">
    <location>
        <begin position="212"/>
        <end position="265"/>
    </location>
</feature>
<feature type="domain" description="MtN3/slv 1">
    <location>
        <begin position="11"/>
        <end position="97"/>
    </location>
</feature>
<feature type="domain" description="MtN3/slv 2">
    <location>
        <begin position="132"/>
        <end position="216"/>
    </location>
</feature>
<accession>Q9FPN0</accession>
<reference key="1">
    <citation type="journal article" date="2000" name="Plant J.">
        <title>NEC1, a novel gene, highly expressed in nectary tissue of Petunia hybrida.</title>
        <authorList>
            <person name="Ge Y.-X."/>
            <person name="Angenent G.C."/>
            <person name="Wittich P.E."/>
            <person name="Peters J."/>
            <person name="Franken J."/>
            <person name="Busscher M."/>
            <person name="Zhang L.M."/>
            <person name="Dahlhaus E."/>
            <person name="Kater M.M."/>
            <person name="Wullems G.J."/>
            <person name="Creemers-Molenaar T."/>
        </authorList>
    </citation>
    <scope>NUCLEOTIDE SEQUENCE [MRNA]</scope>
    <scope>FUNCTION</scope>
    <scope>TISSUE SPECIFICITY</scope>
    <scope>DEVELOPMENTAL STAGE</scope>
</reference>
<reference key="2">
    <citation type="journal article" date="2001" name="Mol. Genet. Genomics">
        <title>Partial silencing of the NEC1 gene results in early opening of anthers in Petunia hybrida.</title>
        <authorList>
            <person name="Ge Y.-X."/>
            <person name="Angenent G.C."/>
            <person name="Dahlhaus E."/>
            <person name="Franken J."/>
            <person name="Peters J."/>
            <person name="Wullems G.J."/>
            <person name="Creemers-Molenaar J."/>
        </authorList>
    </citation>
    <scope>FUNCTION</scope>
    <scope>DISRUPTION PHENOTYPE</scope>
    <source>
        <strain>cv. W115</strain>
        <strain>cv. W138</strain>
    </source>
</reference>
<keyword id="KW-1003">Cell membrane</keyword>
<keyword id="KW-0472">Membrane</keyword>
<keyword id="KW-0677">Repeat</keyword>
<keyword id="KW-0762">Sugar transport</keyword>
<keyword id="KW-0812">Transmembrane</keyword>
<keyword id="KW-1133">Transmembrane helix</keyword>
<keyword id="KW-0813">Transport</keyword>